<feature type="signal peptide" evidence="1">
    <location>
        <begin position="1"/>
        <end position="29"/>
    </location>
</feature>
<feature type="chain" id="PRO_0000251921" description="Thiol S-methyltransferase TMT1A">
    <location>
        <begin position="30"/>
        <end position="244"/>
    </location>
</feature>
<feature type="region of interest" description="Targeting to lipid droplets" evidence="2">
    <location>
        <begin position="1"/>
        <end position="28"/>
    </location>
</feature>
<feature type="sequence variant" id="VAR_050296" description="In dbSNP:rs28372674.">
    <original>A</original>
    <variation>T</variation>
    <location>
        <position position="134"/>
    </location>
</feature>
<feature type="sequence conflict" description="In Ref. 3; BAB14913." evidence="10" ref="3">
    <original>F</original>
    <variation>L</variation>
    <location>
        <position position="39"/>
    </location>
</feature>
<accession>Q9H8H3</accession>
<accession>Q9H7R3</accession>
<accession>Q9UHZ7</accession>
<accession>Q9Y422</accession>
<reference key="1">
    <citation type="submission" date="2003-01" db="EMBL/GenBank/DDBJ databases">
        <title>Expression profiling of alternatively activated macrophages.</title>
        <authorList>
            <person name="Gratchev A."/>
            <person name="Kzhyhskowska J."/>
            <person name="Utikal J."/>
            <person name="Goerdt S."/>
        </authorList>
    </citation>
    <scope>NUCLEOTIDE SEQUENCE [MRNA]</scope>
</reference>
<reference key="2">
    <citation type="journal article" date="2003" name="Genome Res.">
        <title>The secreted protein discovery initiative (SPDI), a large-scale effort to identify novel human secreted and transmembrane proteins: a bioinformatics assessment.</title>
        <authorList>
            <person name="Clark H.F."/>
            <person name="Gurney A.L."/>
            <person name="Abaya E."/>
            <person name="Baker K."/>
            <person name="Baldwin D.T."/>
            <person name="Brush J."/>
            <person name="Chen J."/>
            <person name="Chow B."/>
            <person name="Chui C."/>
            <person name="Crowley C."/>
            <person name="Currell B."/>
            <person name="Deuel B."/>
            <person name="Dowd P."/>
            <person name="Eaton D."/>
            <person name="Foster J.S."/>
            <person name="Grimaldi C."/>
            <person name="Gu Q."/>
            <person name="Hass P.E."/>
            <person name="Heldens S."/>
            <person name="Huang A."/>
            <person name="Kim H.S."/>
            <person name="Klimowski L."/>
            <person name="Jin Y."/>
            <person name="Johnson S."/>
            <person name="Lee J."/>
            <person name="Lewis L."/>
            <person name="Liao D."/>
            <person name="Mark M.R."/>
            <person name="Robbie E."/>
            <person name="Sanchez C."/>
            <person name="Schoenfeld J."/>
            <person name="Seshagiri S."/>
            <person name="Simmons L."/>
            <person name="Singh J."/>
            <person name="Smith V."/>
            <person name="Stinson J."/>
            <person name="Vagts A."/>
            <person name="Vandlen R.L."/>
            <person name="Watanabe C."/>
            <person name="Wieand D."/>
            <person name="Woods K."/>
            <person name="Xie M.-H."/>
            <person name="Yansura D.G."/>
            <person name="Yi S."/>
            <person name="Yu G."/>
            <person name="Yuan J."/>
            <person name="Zhang M."/>
            <person name="Zhang Z."/>
            <person name="Goddard A.D."/>
            <person name="Wood W.I."/>
            <person name="Godowski P.J."/>
            <person name="Gray A.M."/>
        </authorList>
    </citation>
    <scope>NUCLEOTIDE SEQUENCE [LARGE SCALE MRNA]</scope>
</reference>
<reference key="3">
    <citation type="journal article" date="2004" name="Nat. Genet.">
        <title>Complete sequencing and characterization of 21,243 full-length human cDNAs.</title>
        <authorList>
            <person name="Ota T."/>
            <person name="Suzuki Y."/>
            <person name="Nishikawa T."/>
            <person name="Otsuki T."/>
            <person name="Sugiyama T."/>
            <person name="Irie R."/>
            <person name="Wakamatsu A."/>
            <person name="Hayashi K."/>
            <person name="Sato H."/>
            <person name="Nagai K."/>
            <person name="Kimura K."/>
            <person name="Makita H."/>
            <person name="Sekine M."/>
            <person name="Obayashi M."/>
            <person name="Nishi T."/>
            <person name="Shibahara T."/>
            <person name="Tanaka T."/>
            <person name="Ishii S."/>
            <person name="Yamamoto J."/>
            <person name="Saito K."/>
            <person name="Kawai Y."/>
            <person name="Isono Y."/>
            <person name="Nakamura Y."/>
            <person name="Nagahari K."/>
            <person name="Murakami K."/>
            <person name="Yasuda T."/>
            <person name="Iwayanagi T."/>
            <person name="Wagatsuma M."/>
            <person name="Shiratori A."/>
            <person name="Sudo H."/>
            <person name="Hosoiri T."/>
            <person name="Kaku Y."/>
            <person name="Kodaira H."/>
            <person name="Kondo H."/>
            <person name="Sugawara M."/>
            <person name="Takahashi M."/>
            <person name="Kanda K."/>
            <person name="Yokoi T."/>
            <person name="Furuya T."/>
            <person name="Kikkawa E."/>
            <person name="Omura Y."/>
            <person name="Abe K."/>
            <person name="Kamihara K."/>
            <person name="Katsuta N."/>
            <person name="Sato K."/>
            <person name="Tanikawa M."/>
            <person name="Yamazaki M."/>
            <person name="Ninomiya K."/>
            <person name="Ishibashi T."/>
            <person name="Yamashita H."/>
            <person name="Murakawa K."/>
            <person name="Fujimori K."/>
            <person name="Tanai H."/>
            <person name="Kimata M."/>
            <person name="Watanabe M."/>
            <person name="Hiraoka S."/>
            <person name="Chiba Y."/>
            <person name="Ishida S."/>
            <person name="Ono Y."/>
            <person name="Takiguchi S."/>
            <person name="Watanabe S."/>
            <person name="Yosida M."/>
            <person name="Hotuta T."/>
            <person name="Kusano J."/>
            <person name="Kanehori K."/>
            <person name="Takahashi-Fujii A."/>
            <person name="Hara H."/>
            <person name="Tanase T.-O."/>
            <person name="Nomura Y."/>
            <person name="Togiya S."/>
            <person name="Komai F."/>
            <person name="Hara R."/>
            <person name="Takeuchi K."/>
            <person name="Arita M."/>
            <person name="Imose N."/>
            <person name="Musashino K."/>
            <person name="Yuuki H."/>
            <person name="Oshima A."/>
            <person name="Sasaki N."/>
            <person name="Aotsuka S."/>
            <person name="Yoshikawa Y."/>
            <person name="Matsunawa H."/>
            <person name="Ichihara T."/>
            <person name="Shiohata N."/>
            <person name="Sano S."/>
            <person name="Moriya S."/>
            <person name="Momiyama H."/>
            <person name="Satoh N."/>
            <person name="Takami S."/>
            <person name="Terashima Y."/>
            <person name="Suzuki O."/>
            <person name="Nakagawa S."/>
            <person name="Senoh A."/>
            <person name="Mizoguchi H."/>
            <person name="Goto Y."/>
            <person name="Shimizu F."/>
            <person name="Wakebe H."/>
            <person name="Hishigaki H."/>
            <person name="Watanabe T."/>
            <person name="Sugiyama A."/>
            <person name="Takemoto M."/>
            <person name="Kawakami B."/>
            <person name="Yamazaki M."/>
            <person name="Watanabe K."/>
            <person name="Kumagai A."/>
            <person name="Itakura S."/>
            <person name="Fukuzumi Y."/>
            <person name="Fujimori Y."/>
            <person name="Komiyama M."/>
            <person name="Tashiro H."/>
            <person name="Tanigami A."/>
            <person name="Fujiwara T."/>
            <person name="Ono T."/>
            <person name="Yamada K."/>
            <person name="Fujii Y."/>
            <person name="Ozaki K."/>
            <person name="Hirao M."/>
            <person name="Ohmori Y."/>
            <person name="Kawabata A."/>
            <person name="Hikiji T."/>
            <person name="Kobatake N."/>
            <person name="Inagaki H."/>
            <person name="Ikema Y."/>
            <person name="Okamoto S."/>
            <person name="Okitani R."/>
            <person name="Kawakami T."/>
            <person name="Noguchi S."/>
            <person name="Itoh T."/>
            <person name="Shigeta K."/>
            <person name="Senba T."/>
            <person name="Matsumura K."/>
            <person name="Nakajima Y."/>
            <person name="Mizuno T."/>
            <person name="Morinaga M."/>
            <person name="Sasaki M."/>
            <person name="Togashi T."/>
            <person name="Oyama M."/>
            <person name="Hata H."/>
            <person name="Watanabe M."/>
            <person name="Komatsu T."/>
            <person name="Mizushima-Sugano J."/>
            <person name="Satoh T."/>
            <person name="Shirai Y."/>
            <person name="Takahashi Y."/>
            <person name="Nakagawa K."/>
            <person name="Okumura K."/>
            <person name="Nagase T."/>
            <person name="Nomura N."/>
            <person name="Kikuchi H."/>
            <person name="Masuho Y."/>
            <person name="Yamashita R."/>
            <person name="Nakai K."/>
            <person name="Yada T."/>
            <person name="Nakamura Y."/>
            <person name="Ohara O."/>
            <person name="Isogai T."/>
            <person name="Sugano S."/>
        </authorList>
    </citation>
    <scope>NUCLEOTIDE SEQUENCE [LARGE SCALE MRNA]</scope>
    <source>
        <tissue>Placenta</tissue>
        <tissue>Thyroid</tissue>
    </source>
</reference>
<reference key="4">
    <citation type="journal article" date="2004" name="Genome Res.">
        <title>The status, quality, and expansion of the NIH full-length cDNA project: the Mammalian Gene Collection (MGC).</title>
        <authorList>
            <consortium name="The MGC Project Team"/>
        </authorList>
    </citation>
    <scope>NUCLEOTIDE SEQUENCE [LARGE SCALE MRNA]</scope>
    <source>
        <tissue>Pancreas</tissue>
        <tissue>Placenta</tissue>
    </source>
</reference>
<reference key="5">
    <citation type="journal article" date="2007" name="BMC Genomics">
        <title>The full-ORF clone resource of the German cDNA consortium.</title>
        <authorList>
            <person name="Bechtel S."/>
            <person name="Rosenfelder H."/>
            <person name="Duda A."/>
            <person name="Schmidt C.P."/>
            <person name="Ernst U."/>
            <person name="Wellenreuther R."/>
            <person name="Mehrle A."/>
            <person name="Schuster C."/>
            <person name="Bahr A."/>
            <person name="Bloecker H."/>
            <person name="Heubner D."/>
            <person name="Hoerlein A."/>
            <person name="Michel G."/>
            <person name="Wedler H."/>
            <person name="Koehrer K."/>
            <person name="Ottenwaelder B."/>
            <person name="Poustka A."/>
            <person name="Wiemann S."/>
            <person name="Schupp I."/>
        </authorList>
    </citation>
    <scope>NUCLEOTIDE SEQUENCE [LARGE SCALE MRNA] OF 2-244</scope>
    <source>
        <tissue>Uterus</tissue>
    </source>
</reference>
<reference key="6">
    <citation type="submission" date="1998-12" db="EMBL/GenBank/DDBJ databases">
        <title>Functional prediction of the coding sequences of 14 new genes deduced by analysis of cDNA clones from human fetal liver.</title>
        <authorList>
            <person name="Zhang C."/>
            <person name="Yu Y."/>
            <person name="Zhang S."/>
            <person name="Ouyang S."/>
            <person name="Luo L."/>
            <person name="Wei H."/>
            <person name="Zhou G."/>
            <person name="Liu M."/>
            <person name="He F."/>
        </authorList>
    </citation>
    <scope>NUCLEOTIDE SEQUENCE [LARGE SCALE MRNA] OF 14-244</scope>
    <source>
        <tissue>Fetal liver</tissue>
    </source>
</reference>
<reference key="7">
    <citation type="journal article" date="2008" name="J. Cell Sci.">
        <title>Identification of a novel N-terminal hydrophobic sequence that targets proteins to lipid droplets.</title>
        <authorList>
            <person name="Zehmer J.K."/>
            <person name="Bartz R."/>
            <person name="Liu P."/>
            <person name="Anderson R.G.W."/>
        </authorList>
    </citation>
    <scope>SUBCELLULAR LOCATION</scope>
    <scope>SUBUNIT</scope>
    <scope>REGION</scope>
</reference>
<reference key="8">
    <citation type="journal article" date="2009" name="J. Cell Sci.">
        <title>Targeting sequences of UBXD8 and AAM-B reveal that the ER has a direct role in the emergence and regression of lipid droplets.</title>
        <authorList>
            <person name="Zehmer J.K."/>
            <person name="Bartz R."/>
            <person name="Bisel B."/>
            <person name="Liu P."/>
            <person name="Seemann J."/>
            <person name="Anderson R.G.W."/>
        </authorList>
    </citation>
    <scope>SUBCELLULAR LOCATION</scope>
    <scope>FUNCTION</scope>
</reference>
<reference key="9">
    <citation type="journal article" date="2011" name="BMC Syst. Biol.">
        <title>Initial characterization of the human central proteome.</title>
        <authorList>
            <person name="Burkard T.R."/>
            <person name="Planyavsky M."/>
            <person name="Kaupe I."/>
            <person name="Breitwieser F.P."/>
            <person name="Buerckstuemmer T."/>
            <person name="Bennett K.L."/>
            <person name="Superti-Furga G."/>
            <person name="Colinge J."/>
        </authorList>
    </citation>
    <scope>IDENTIFICATION BY MASS SPECTROMETRY [LARGE SCALE ANALYSIS]</scope>
</reference>
<reference key="10">
    <citation type="journal article" date="2014" name="J. Proteomics">
        <title>An enzyme assisted RP-RPLC approach for in-depth analysis of human liver phosphoproteome.</title>
        <authorList>
            <person name="Bian Y."/>
            <person name="Song C."/>
            <person name="Cheng K."/>
            <person name="Dong M."/>
            <person name="Wang F."/>
            <person name="Huang J."/>
            <person name="Sun D."/>
            <person name="Wang L."/>
            <person name="Ye M."/>
            <person name="Zou H."/>
        </authorList>
    </citation>
    <scope>IDENTIFICATION BY MASS SPECTROMETRY [LARGE SCALE ANALYSIS]</scope>
    <source>
        <tissue>Liver</tissue>
    </source>
</reference>
<reference key="11">
    <citation type="journal article" date="2015" name="PLoS ONE">
        <title>AAM-B Interacts with Nonstructural 4B and Regulates Hepatitis C Virus Propagation.</title>
        <authorList>
            <person name="Park E.M."/>
            <person name="Lim Y.S."/>
            <person name="Ahn B.Y."/>
            <person name="Hwang S.B."/>
        </authorList>
    </citation>
    <scope>FUNCTION (MICROBIAL INFECTION)</scope>
    <scope>SUBCELLULAR LOCATION</scope>
    <scope>INTERACTION WITH HCV NSB4</scope>
</reference>
<reference key="12">
    <citation type="journal article" date="2021" name="Cell. Death. Discov.">
        <title>Methyltransferase-like protein 7A (METTL7A) promotes cell survival and osteogenic differentiation under metabolic stress.</title>
        <authorList>
            <person name="Lee E."/>
            <person name="Kim J.Y."/>
            <person name="Kim T.K."/>
            <person name="Park S.Y."/>
            <person name="Im G.I."/>
        </authorList>
    </citation>
    <scope>FUNCTION</scope>
</reference>
<reference key="13">
    <citation type="journal article" date="2021" name="Front. Cell Dev. Biol.">
        <title>miR-6807-5p Inhibited the Odontogenic Differentiation of Human Dental Pulp Stem Cells Through Directly Targeting METTL7A.</title>
        <authorList>
            <person name="Wang N."/>
            <person name="Han X."/>
            <person name="Yang H."/>
            <person name="Xia D."/>
            <person name="Fan Z."/>
        </authorList>
    </citation>
    <scope>FUNCTION</scope>
    <scope>INTERACTION WITH SNRNP200</scope>
    <scope>INDUCTION</scope>
</reference>
<reference key="14">
    <citation type="journal article" date="2022" name="J. Exp. Clin. Cancer Res.">
        <title>Induction of m6A methylation in adipocyte exosomal LncRNAs mediates myeloma drug resistance.</title>
        <authorList>
            <person name="Wang Z."/>
            <person name="He J."/>
            <person name="Bach D.H."/>
            <person name="Huang Y.H."/>
            <person name="Li Z."/>
            <person name="Liu H."/>
            <person name="Lin P."/>
            <person name="Yang J."/>
        </authorList>
    </citation>
    <scope>FUNCTION</scope>
    <scope>CATALYTIC ACTIVITY</scope>
    <scope>PTM</scope>
</reference>
<reference key="15">
    <citation type="journal article" date="2023" name="Drug Metab. Dispos.">
        <title>METTL7A (TMT1A) and METTL7B (TMT1B) Are Responsible for Alkyl S-Thiol Methyl Transferase Activity in Liver.</title>
        <authorList>
            <person name="Russell D.A."/>
            <person name="Chau M.K."/>
            <person name="Shi Y."/>
            <person name="Levasseur I.N."/>
            <person name="Maldonato B.J."/>
            <person name="Totah R.A."/>
        </authorList>
    </citation>
    <scope>FUNCTION</scope>
    <scope>CATALYTIC ACTIVITY</scope>
    <scope>ACTIVITY REGULATION</scope>
    <scope>BIOPHYSICOCHEMICAL PROPERTIES</scope>
    <scope>SUBCELLULAR LOCATION</scope>
    <scope>TISSUE SPECIFICITY</scope>
</reference>
<gene>
    <name evidence="9 12" type="primary">TMT1A</name>
    <name evidence="9" type="synonym">METTL7A</name>
    <name type="ORF">PRO0066</name>
    <name type="ORF">UNQ1902/PRO4348</name>
</gene>
<dbReference type="EC" id="2.1.1.9" evidence="7"/>
<dbReference type="EC" id="2.1.1.348" evidence="6"/>
<dbReference type="EMBL" id="AJ536233">
    <property type="protein sequence ID" value="CAD60207.1"/>
    <property type="molecule type" value="mRNA"/>
</dbReference>
<dbReference type="EMBL" id="AY358797">
    <property type="protein sequence ID" value="AAQ89157.1"/>
    <property type="molecule type" value="mRNA"/>
</dbReference>
<dbReference type="EMBL" id="AK023693">
    <property type="protein sequence ID" value="BAB14643.1"/>
    <property type="molecule type" value="mRNA"/>
</dbReference>
<dbReference type="EMBL" id="AK024409">
    <property type="protein sequence ID" value="BAB14913.1"/>
    <property type="molecule type" value="mRNA"/>
</dbReference>
<dbReference type="EMBL" id="BC004492">
    <property type="protein sequence ID" value="AAH04492.1"/>
    <property type="molecule type" value="mRNA"/>
</dbReference>
<dbReference type="EMBL" id="BC008180">
    <property type="protein sequence ID" value="AAH08180.1"/>
    <property type="molecule type" value="mRNA"/>
</dbReference>
<dbReference type="EMBL" id="AL050159">
    <property type="protein sequence ID" value="CAB43300.1"/>
    <property type="molecule type" value="mRNA"/>
</dbReference>
<dbReference type="EMBL" id="AF113007">
    <property type="protein sequence ID" value="AAF20268.1"/>
    <property type="status" value="ALT_INIT"/>
    <property type="molecule type" value="mRNA"/>
</dbReference>
<dbReference type="CCDS" id="CCDS8804.1"/>
<dbReference type="PIR" id="T08785">
    <property type="entry name" value="T08785"/>
</dbReference>
<dbReference type="RefSeq" id="NP_054752.3">
    <property type="nucleotide sequence ID" value="NM_014033.3"/>
</dbReference>
<dbReference type="RefSeq" id="XP_006719395.1">
    <property type="nucleotide sequence ID" value="XM_006719332.1"/>
</dbReference>
<dbReference type="RefSeq" id="XP_054227679.1">
    <property type="nucleotide sequence ID" value="XM_054371704.1"/>
</dbReference>
<dbReference type="SMR" id="Q9H8H3"/>
<dbReference type="BioGRID" id="117366">
    <property type="interactions" value="365"/>
</dbReference>
<dbReference type="FunCoup" id="Q9H8H3">
    <property type="interactions" value="36"/>
</dbReference>
<dbReference type="IntAct" id="Q9H8H3">
    <property type="interactions" value="31"/>
</dbReference>
<dbReference type="MINT" id="Q9H8H3"/>
<dbReference type="STRING" id="9606.ENSP00000448785"/>
<dbReference type="iPTMnet" id="Q9H8H3"/>
<dbReference type="PhosphoSitePlus" id="Q9H8H3"/>
<dbReference type="SwissPalm" id="Q9H8H3"/>
<dbReference type="BioMuta" id="METTL7A"/>
<dbReference type="DMDM" id="74761529"/>
<dbReference type="CPTAC" id="CPTAC-238"/>
<dbReference type="CPTAC" id="CPTAC-239"/>
<dbReference type="jPOST" id="Q9H8H3"/>
<dbReference type="MassIVE" id="Q9H8H3"/>
<dbReference type="PaxDb" id="9606-ENSP00000448785"/>
<dbReference type="PeptideAtlas" id="Q9H8H3"/>
<dbReference type="ProteomicsDB" id="81213"/>
<dbReference type="Pumba" id="Q9H8H3"/>
<dbReference type="Antibodypedia" id="2699">
    <property type="antibodies" value="230 antibodies from 26 providers"/>
</dbReference>
<dbReference type="DNASU" id="25840"/>
<dbReference type="Ensembl" id="ENST00000332160.5">
    <property type="protein sequence ID" value="ENSP00000331787.4"/>
    <property type="gene ID" value="ENSG00000185432.12"/>
</dbReference>
<dbReference type="Ensembl" id="ENST00000547104.1">
    <property type="protein sequence ID" value="ENSP00000447542.1"/>
    <property type="gene ID" value="ENSG00000185432.12"/>
</dbReference>
<dbReference type="Ensembl" id="ENST00000548553.1">
    <property type="protein sequence ID" value="ENSP00000448785.1"/>
    <property type="gene ID" value="ENSG00000185432.12"/>
</dbReference>
<dbReference type="GeneID" id="25840"/>
<dbReference type="KEGG" id="hsa:25840"/>
<dbReference type="MANE-Select" id="ENST00000332160.5">
    <property type="protein sequence ID" value="ENSP00000331787.4"/>
    <property type="RefSeq nucleotide sequence ID" value="NM_014033.4"/>
    <property type="RefSeq protein sequence ID" value="NP_054752.3"/>
</dbReference>
<dbReference type="UCSC" id="uc001rxb.3">
    <property type="organism name" value="human"/>
</dbReference>
<dbReference type="AGR" id="HGNC:24550"/>
<dbReference type="CTD" id="25840"/>
<dbReference type="DisGeNET" id="25840"/>
<dbReference type="GeneCards" id="TMT1A"/>
<dbReference type="HGNC" id="HGNC:24550">
    <property type="gene designation" value="TMT1A"/>
</dbReference>
<dbReference type="HPA" id="ENSG00000185432">
    <property type="expression patterns" value="Tissue enhanced (liver)"/>
</dbReference>
<dbReference type="MIM" id="618338">
    <property type="type" value="gene"/>
</dbReference>
<dbReference type="neXtProt" id="NX_Q9H8H3"/>
<dbReference type="OpenTargets" id="ENSG00000185432"/>
<dbReference type="PharmGKB" id="PA128394635"/>
<dbReference type="VEuPathDB" id="HostDB:ENSG00000185432"/>
<dbReference type="eggNOG" id="KOG4300">
    <property type="taxonomic scope" value="Eukaryota"/>
</dbReference>
<dbReference type="GeneTree" id="ENSGT00940000154786"/>
<dbReference type="InParanoid" id="Q9H8H3"/>
<dbReference type="OMA" id="PLWYYFG"/>
<dbReference type="OrthoDB" id="416496at2759"/>
<dbReference type="PAN-GO" id="Q9H8H3">
    <property type="GO annotations" value="1 GO annotation based on evolutionary models"/>
</dbReference>
<dbReference type="PhylomeDB" id="Q9H8H3"/>
<dbReference type="TreeFam" id="TF331790"/>
<dbReference type="PathwayCommons" id="Q9H8H3"/>
<dbReference type="Reactome" id="R-HSA-6798695">
    <property type="pathway name" value="Neutrophil degranulation"/>
</dbReference>
<dbReference type="SignaLink" id="Q9H8H3"/>
<dbReference type="BioGRID-ORCS" id="25840">
    <property type="hits" value="55 hits in 1153 CRISPR screens"/>
</dbReference>
<dbReference type="ChiTaRS" id="METTL7A">
    <property type="organism name" value="human"/>
</dbReference>
<dbReference type="GenomeRNAi" id="25840"/>
<dbReference type="Pharos" id="Q9H8H3">
    <property type="development level" value="Tbio"/>
</dbReference>
<dbReference type="PRO" id="PR:Q9H8H3"/>
<dbReference type="Proteomes" id="UP000005640">
    <property type="component" value="Chromosome 12"/>
</dbReference>
<dbReference type="RNAct" id="Q9H8H3">
    <property type="molecule type" value="protein"/>
</dbReference>
<dbReference type="Bgee" id="ENSG00000185432">
    <property type="expression patterns" value="Expressed in bronchial epithelial cell and 209 other cell types or tissues"/>
</dbReference>
<dbReference type="ExpressionAtlas" id="Q9H8H3">
    <property type="expression patterns" value="baseline and differential"/>
</dbReference>
<dbReference type="GO" id="GO:0005829">
    <property type="term" value="C:cytosol"/>
    <property type="evidence" value="ECO:0007669"/>
    <property type="project" value="UniProtKB-SubCell"/>
</dbReference>
<dbReference type="GO" id="GO:0005783">
    <property type="term" value="C:endoplasmic reticulum"/>
    <property type="evidence" value="ECO:0000314"/>
    <property type="project" value="UniProtKB"/>
</dbReference>
<dbReference type="GO" id="GO:0005576">
    <property type="term" value="C:extracellular region"/>
    <property type="evidence" value="ECO:0000304"/>
    <property type="project" value="Reactome"/>
</dbReference>
<dbReference type="GO" id="GO:0005811">
    <property type="term" value="C:lipid droplet"/>
    <property type="evidence" value="ECO:0000314"/>
    <property type="project" value="UniProtKB"/>
</dbReference>
<dbReference type="GO" id="GO:0016020">
    <property type="term" value="C:membrane"/>
    <property type="evidence" value="ECO:0007669"/>
    <property type="project" value="UniProtKB-SubCell"/>
</dbReference>
<dbReference type="GO" id="GO:1904724">
    <property type="term" value="C:tertiary granule lumen"/>
    <property type="evidence" value="ECO:0000304"/>
    <property type="project" value="Reactome"/>
</dbReference>
<dbReference type="GO" id="GO:0008168">
    <property type="term" value="F:methyltransferase activity"/>
    <property type="evidence" value="ECO:0000318"/>
    <property type="project" value="GO_Central"/>
</dbReference>
<dbReference type="GO" id="GO:0001734">
    <property type="term" value="F:mRNA m(6)A methyltransferase activity"/>
    <property type="evidence" value="ECO:0000315"/>
    <property type="project" value="UniProtKB"/>
</dbReference>
<dbReference type="GO" id="GO:0008173">
    <property type="term" value="F:RNA methyltransferase activity"/>
    <property type="evidence" value="ECO:0000314"/>
    <property type="project" value="UniProtKB"/>
</dbReference>
<dbReference type="GO" id="GO:0018708">
    <property type="term" value="F:thiol S-methyltransferase activity"/>
    <property type="evidence" value="ECO:0000314"/>
    <property type="project" value="UniProtKB"/>
</dbReference>
<dbReference type="GO" id="GO:0180035">
    <property type="term" value="P:lncRNA processing"/>
    <property type="evidence" value="ECO:0000315"/>
    <property type="project" value="UniProtKB"/>
</dbReference>
<dbReference type="GO" id="GO:0032259">
    <property type="term" value="P:methylation"/>
    <property type="evidence" value="ECO:0007669"/>
    <property type="project" value="UniProtKB-KW"/>
</dbReference>
<dbReference type="GO" id="GO:0042476">
    <property type="term" value="P:odontogenesis"/>
    <property type="evidence" value="ECO:0000315"/>
    <property type="project" value="UniProtKB"/>
</dbReference>
<dbReference type="GO" id="GO:0001649">
    <property type="term" value="P:osteoblast differentiation"/>
    <property type="evidence" value="ECO:0000315"/>
    <property type="project" value="UniProtKB"/>
</dbReference>
<dbReference type="CDD" id="cd02440">
    <property type="entry name" value="AdoMet_MTases"/>
    <property type="match status" value="1"/>
</dbReference>
<dbReference type="FunFam" id="3.40.50.150:FF:000269">
    <property type="entry name" value="Methyltransferase-like protein 7A"/>
    <property type="match status" value="1"/>
</dbReference>
<dbReference type="Gene3D" id="3.40.50.150">
    <property type="entry name" value="Vaccinia Virus protein VP39"/>
    <property type="match status" value="1"/>
</dbReference>
<dbReference type="InterPro" id="IPR013216">
    <property type="entry name" value="Methyltransf_11"/>
</dbReference>
<dbReference type="InterPro" id="IPR029063">
    <property type="entry name" value="SAM-dependent_MTases_sf"/>
</dbReference>
<dbReference type="InterPro" id="IPR052356">
    <property type="entry name" value="Thiol_S-MT"/>
</dbReference>
<dbReference type="PANTHER" id="PTHR45036:SF5">
    <property type="entry name" value="METHYLTRANSFERASE LIKE 7A1-RELATED"/>
    <property type="match status" value="1"/>
</dbReference>
<dbReference type="PANTHER" id="PTHR45036">
    <property type="entry name" value="METHYLTRANSFERASE LIKE 7B"/>
    <property type="match status" value="1"/>
</dbReference>
<dbReference type="Pfam" id="PF08241">
    <property type="entry name" value="Methyltransf_11"/>
    <property type="match status" value="1"/>
</dbReference>
<dbReference type="SUPFAM" id="SSF53335">
    <property type="entry name" value="S-adenosyl-L-methionine-dependent methyltransferases"/>
    <property type="match status" value="1"/>
</dbReference>
<name>TMT1A_HUMAN</name>
<organism>
    <name type="scientific">Homo sapiens</name>
    <name type="common">Human</name>
    <dbReference type="NCBI Taxonomy" id="9606"/>
    <lineage>
        <taxon>Eukaryota</taxon>
        <taxon>Metazoa</taxon>
        <taxon>Chordata</taxon>
        <taxon>Craniata</taxon>
        <taxon>Vertebrata</taxon>
        <taxon>Euteleostomi</taxon>
        <taxon>Mammalia</taxon>
        <taxon>Eutheria</taxon>
        <taxon>Euarchontoglires</taxon>
        <taxon>Primates</taxon>
        <taxon>Haplorrhini</taxon>
        <taxon>Catarrhini</taxon>
        <taxon>Hominidae</taxon>
        <taxon>Homo</taxon>
    </lineage>
</organism>
<proteinExistence type="evidence at protein level"/>
<keyword id="KW-0963">Cytoplasm</keyword>
<keyword id="KW-0256">Endoplasmic reticulum</keyword>
<keyword id="KW-0945">Host-virus interaction</keyword>
<keyword id="KW-0551">Lipid droplet</keyword>
<keyword id="KW-0472">Membrane</keyword>
<keyword id="KW-0488">Methylation</keyword>
<keyword id="KW-0489">Methyltransferase</keyword>
<keyword id="KW-0492">Microsome</keyword>
<keyword id="KW-1267">Proteomics identification</keyword>
<keyword id="KW-1185">Reference proteome</keyword>
<keyword id="KW-0732">Signal</keyword>
<keyword id="KW-0808">Transferase</keyword>
<evidence type="ECO:0000255" key="1"/>
<evidence type="ECO:0000269" key="2">
    <source>
    </source>
</evidence>
<evidence type="ECO:0000269" key="3">
    <source>
    </source>
</evidence>
<evidence type="ECO:0000269" key="4">
    <source>
    </source>
</evidence>
<evidence type="ECO:0000269" key="5">
    <source>
    </source>
</evidence>
<evidence type="ECO:0000269" key="6">
    <source>
    </source>
</evidence>
<evidence type="ECO:0000269" key="7">
    <source>
    </source>
</evidence>
<evidence type="ECO:0000303" key="8">
    <source>
    </source>
</evidence>
<evidence type="ECO:0000303" key="9">
    <source>
    </source>
</evidence>
<evidence type="ECO:0000305" key="10"/>
<evidence type="ECO:0000305" key="11">
    <source>
    </source>
</evidence>
<evidence type="ECO:0000312" key="12">
    <source>
        <dbReference type="HGNC" id="HGNC:24550"/>
    </source>
</evidence>
<protein>
    <recommendedName>
        <fullName>Thiol S-methyltransferase TMT1A</fullName>
        <ecNumber evidence="7">2.1.1.9</ecNumber>
    </recommendedName>
    <alternativeName>
        <fullName evidence="10">Methyltransferase-like protein 7A</fullName>
    </alternativeName>
    <alternativeName>
        <fullName>N6-adenosine-methyltransferase TMT1A</fullName>
        <ecNumber evidence="6">2.1.1.348</ecNumber>
    </alternativeName>
    <alternativeName>
        <fullName evidence="8">Protein AAM-B</fullName>
    </alternativeName>
    <alternativeName>
        <fullName evidence="12">Thiol methyltransferase 1A</fullName>
    </alternativeName>
</protein>
<comment type="function">
    <text evidence="3 6 7">Thiol S-methyltransferase that catalyzes the transfer of a methyl group from S-adenosyl-L-methionine to alkyl and phenolic thiol-containing acceptor substrates. Together with TMT1B accounts for most of S-thiol methylation activity in the endoplasmic reticulum of hepatocytes (PubMed:37137720). Able to methylate the N6 position of adenosine residues in long non-coding RNAs (lncRNAs). May facilitate lncRNAs transfer into exosomes at the tumor-stroma interface (PubMed:34980213). Promotes osteogenic and odontogenic differentiation by regulating the expression of genes involved in stem cell differentiation and survival (PubMed:34226523, PubMed:34790668). Targeted from the endoplasmic reticulum to lipid droplets, where it recruits cellular proteins to form functional organelles (PubMed:19773358).</text>
</comment>
<comment type="function">
    <text evidence="4">(Microbial infection) May be involved in the assembly and release stages of hepatitis C virus (HCV) life cycle and thus play a crucial role in HCV propagation.</text>
</comment>
<comment type="catalytic activity">
    <reaction evidence="7">
        <text>a thiol + S-adenosyl-L-methionine = a methyl thioether + S-adenosyl-L-homocysteine + H(+)</text>
        <dbReference type="Rhea" id="RHEA:18277"/>
        <dbReference type="ChEBI" id="CHEBI:15378"/>
        <dbReference type="ChEBI" id="CHEBI:29256"/>
        <dbReference type="ChEBI" id="CHEBI:57856"/>
        <dbReference type="ChEBI" id="CHEBI:59789"/>
        <dbReference type="ChEBI" id="CHEBI:86315"/>
        <dbReference type="EC" id="2.1.1.9"/>
    </reaction>
    <physiologicalReaction direction="left-to-right" evidence="7">
        <dbReference type="Rhea" id="RHEA:18278"/>
    </physiologicalReaction>
</comment>
<comment type="catalytic activity">
    <reaction evidence="6">
        <text>an adenosine in mRNA + S-adenosyl-L-methionine = an N(6)-methyladenosine in mRNA + S-adenosyl-L-homocysteine + H(+)</text>
        <dbReference type="Rhea" id="RHEA:55584"/>
        <dbReference type="Rhea" id="RHEA-COMP:12414"/>
        <dbReference type="Rhea" id="RHEA-COMP:12417"/>
        <dbReference type="ChEBI" id="CHEBI:15378"/>
        <dbReference type="ChEBI" id="CHEBI:57856"/>
        <dbReference type="ChEBI" id="CHEBI:59789"/>
        <dbReference type="ChEBI" id="CHEBI:74411"/>
        <dbReference type="ChEBI" id="CHEBI:74449"/>
        <dbReference type="EC" id="2.1.1.348"/>
    </reaction>
    <physiologicalReaction direction="left-to-right" evidence="11">
        <dbReference type="Rhea" id="RHEA:55585"/>
    </physiologicalReaction>
</comment>
<comment type="activity regulation">
    <text evidence="7">Inhibited by 2,3-dichloro-alpha-methylbenzylamine (DCMB).</text>
</comment>
<comment type="biophysicochemical properties">
    <kinetics>
        <KM evidence="7">53.73 uM for S-adenosyl-L-methionine</KM>
        <KM evidence="7">39.41 uM for 7alpha-thiospironolactone</KM>
    </kinetics>
</comment>
<comment type="subunit">
    <text evidence="4">(Microbial infection) Interacts with HCV non-structural protein 4B/NS4B (via C-terminal region); this interaction may promote the recruitment of NS4B in the proximity of lipid droplet.</text>
</comment>
<comment type="subunit">
    <text evidence="2 5">Self-associates (PubMed:18477614). Interacts with SNRNP200; this interaction may promote the odontogenic differentiation (PubMed:34790668).</text>
</comment>
<comment type="interaction">
    <interactant intactId="EBI-1390168">
        <id>Q9H8H3</id>
    </interactant>
    <interactant intactId="EBI-946046">
        <id>P54252</id>
        <label>ATXN3</label>
    </interactant>
    <organismsDiffer>false</organismsDiffer>
    <experiments>3</experiments>
</comment>
<comment type="interaction">
    <interactant intactId="EBI-1390168">
        <id>Q9H8H3</id>
    </interactant>
    <interactant intactId="EBI-21603100">
        <id>P26378-2</id>
        <label>ELAVL4</label>
    </interactant>
    <organismsDiffer>false</organismsDiffer>
    <experiments>3</experiments>
</comment>
<comment type="interaction">
    <interactant intactId="EBI-1390168">
        <id>Q9H8H3</id>
    </interactant>
    <interactant intactId="EBI-348399">
        <id>P22607</id>
        <label>FGFR3</label>
    </interactant>
    <organismsDiffer>false</organismsDiffer>
    <experiments>3</experiments>
</comment>
<comment type="interaction">
    <interactant intactId="EBI-1390168">
        <id>Q9H8H3</id>
    </interactant>
    <interactant intactId="EBI-351506">
        <id>P06396</id>
        <label>GSN</label>
    </interactant>
    <organismsDiffer>false</organismsDiffer>
    <experiments>3</experiments>
</comment>
<comment type="interaction">
    <interactant intactId="EBI-1390168">
        <id>Q9H8H3</id>
    </interactant>
    <interactant intactId="EBI-399080">
        <id>Q92993</id>
        <label>KAT5</label>
    </interactant>
    <organismsDiffer>false</organismsDiffer>
    <experiments>3</experiments>
</comment>
<comment type="interaction">
    <interactant intactId="EBI-1390168">
        <id>Q9H8H3</id>
    </interactant>
    <interactant intactId="EBI-11742507">
        <id>Q8TAP4-4</id>
        <label>LMO3</label>
    </interactant>
    <organismsDiffer>false</organismsDiffer>
    <experiments>3</experiments>
</comment>
<comment type="interaction">
    <interactant intactId="EBI-1390168">
        <id>Q9H8H3</id>
    </interactant>
    <interactant intactId="EBI-1224896">
        <id>O75489</id>
        <label>NDUFS3</label>
    </interactant>
    <organismsDiffer>false</organismsDiffer>
    <experiments>3</experiments>
</comment>
<comment type="interaction">
    <interactant intactId="EBI-1390168">
        <id>Q9H8H3</id>
    </interactant>
    <interactant intactId="EBI-25884072">
        <id>P62937-2</id>
        <label>PPIA</label>
    </interactant>
    <organismsDiffer>false</organismsDiffer>
    <experiments>3</experiments>
</comment>
<comment type="interaction">
    <interactant intactId="EBI-1390168">
        <id>Q9H8H3</id>
    </interactant>
    <interactant intactId="EBI-1383528">
        <id>P17252</id>
        <label>PRKCA</label>
    </interactant>
    <organismsDiffer>false</organismsDiffer>
    <experiments>3</experiments>
</comment>
<comment type="interaction">
    <interactant intactId="EBI-1390168">
        <id>Q9H8H3</id>
    </interactant>
    <interactant intactId="EBI-9090795">
        <id>Q15047-2</id>
        <label>SETDB1</label>
    </interactant>
    <organismsDiffer>false</organismsDiffer>
    <experiments>3</experiments>
</comment>
<comment type="interaction">
    <interactant intactId="EBI-1390168">
        <id>Q9H8H3</id>
    </interactant>
    <interactant intactId="EBI-359832">
        <id>P61981</id>
        <label>YWHAG</label>
    </interactant>
    <organismsDiffer>false</organismsDiffer>
    <experiments>3</experiments>
</comment>
<comment type="subcellular location">
    <subcellularLocation>
        <location evidence="2 3 4">Lipid droplet</location>
    </subcellularLocation>
    <subcellularLocation>
        <location evidence="3">Endoplasmic reticulum</location>
    </subcellularLocation>
    <subcellularLocation>
        <location evidence="2">Membrane</location>
    </subcellularLocation>
    <subcellularLocation>
        <location evidence="7">Microsome</location>
    </subcellularLocation>
    <subcellularLocation>
        <location evidence="7">Cytoplasm</location>
        <location evidence="7">Cytosol</location>
    </subcellularLocation>
    <text evidence="2 3">Inserted in the ER membrane and migrates from the inserted site to lipid droplet.</text>
</comment>
<comment type="tissue specificity">
    <text evidence="7">Expressed in the liver.</text>
</comment>
<comment type="induction">
    <text evidence="5">Silenced by miR-6807-5p.</text>
</comment>
<comment type="PTM">
    <text evidence="6">Methylated at lysine residues most likely by EZH2.</text>
</comment>
<comment type="miscellaneous">
    <text evidence="7">Selectively methylates drugs containing thiol-moieties such as 7alpha-thiospironolactone and mertansine.</text>
</comment>
<comment type="similarity">
    <text evidence="10">Belongs to the methyltransferase superfamily.</text>
</comment>
<comment type="sequence caution" evidence="10">
    <conflict type="erroneous initiation">
        <sequence resource="EMBL-CDS" id="AAF20268"/>
    </conflict>
</comment>
<sequence>MELTIFILRLAIYILTFPLYLLNFLGLWSWICKKWFPYFLVRFTVIYNEQMASKKRELFSNLQEFAGPSGKLSLLEVGCGTGANFKFYPPGCRVTCIDPNPNFEKFLIKSIAENRHLQFERFVVAAGENMHQVADGSVDVVVCTLVLCSVKNQERILREVCRVLRPGGAFYFMEHVAAECSTWNYFWQQVLDPAWHLLFDGCNLTRESWKALERASFSKLKLQHIQAPLSWELVRPHIYGYAVK</sequence>